<feature type="chain" id="PRO_1000096926" description="Protoheme IX farnesyltransferase">
    <location>
        <begin position="1"/>
        <end position="316"/>
    </location>
</feature>
<feature type="transmembrane region" description="Helical" evidence="1">
    <location>
        <begin position="32"/>
        <end position="52"/>
    </location>
</feature>
<feature type="transmembrane region" description="Helical" evidence="1">
    <location>
        <begin position="53"/>
        <end position="73"/>
    </location>
</feature>
<feature type="transmembrane region" description="Helical" evidence="1">
    <location>
        <begin position="93"/>
        <end position="113"/>
    </location>
</feature>
<feature type="transmembrane region" description="Helical" evidence="1">
    <location>
        <begin position="116"/>
        <end position="136"/>
    </location>
</feature>
<feature type="transmembrane region" description="Helical" evidence="1">
    <location>
        <begin position="152"/>
        <end position="172"/>
    </location>
</feature>
<feature type="transmembrane region" description="Helical" evidence="1">
    <location>
        <begin position="180"/>
        <end position="200"/>
    </location>
</feature>
<feature type="transmembrane region" description="Helical" evidence="1">
    <location>
        <begin position="221"/>
        <end position="241"/>
    </location>
</feature>
<feature type="transmembrane region" description="Helical" evidence="1">
    <location>
        <begin position="252"/>
        <end position="271"/>
    </location>
</feature>
<feature type="transmembrane region" description="Helical" evidence="1">
    <location>
        <begin position="289"/>
        <end position="309"/>
    </location>
</feature>
<sequence length="316" mass="33925">MTVIDNHGALAKDGELSEASARDYFELLKPRVMSLVVFTAFAGLVLAPGHIHPVLGLIAILCIAVGAGASGALNMWYDADIDAIMSRTAKRPIPAGRIAPSEALAFGLVLSGFSVVILGLAVNWLSAGILAFTIFFYAVVYTMWLKRSTPQNIVIGGAAGAFPPMIGWACVTNSVTIESTVLFLIIFLWTPAHFWALALFKMRDYEAVGVPMLPNVAGERVTKHQIVAYAVLTAVCGILPSFLGFASFGYGLVAAALGAIFIYCSIAVWRMPDGDLKMIPAKKLFAFSIFYLFAVFSALMIDRLASIFVSHTGGWF</sequence>
<accession>B5ZSV2</accession>
<keyword id="KW-0997">Cell inner membrane</keyword>
<keyword id="KW-1003">Cell membrane</keyword>
<keyword id="KW-0350">Heme biosynthesis</keyword>
<keyword id="KW-0472">Membrane</keyword>
<keyword id="KW-1185">Reference proteome</keyword>
<keyword id="KW-0808">Transferase</keyword>
<keyword id="KW-0812">Transmembrane</keyword>
<keyword id="KW-1133">Transmembrane helix</keyword>
<organism>
    <name type="scientific">Rhizobium leguminosarum bv. trifolii (strain WSM2304)</name>
    <dbReference type="NCBI Taxonomy" id="395492"/>
    <lineage>
        <taxon>Bacteria</taxon>
        <taxon>Pseudomonadati</taxon>
        <taxon>Pseudomonadota</taxon>
        <taxon>Alphaproteobacteria</taxon>
        <taxon>Hyphomicrobiales</taxon>
        <taxon>Rhizobiaceae</taxon>
        <taxon>Rhizobium/Agrobacterium group</taxon>
        <taxon>Rhizobium</taxon>
    </lineage>
</organism>
<name>COXX_RHILW</name>
<evidence type="ECO:0000255" key="1">
    <source>
        <dbReference type="HAMAP-Rule" id="MF_00154"/>
    </source>
</evidence>
<dbReference type="EC" id="2.5.1.141" evidence="1"/>
<dbReference type="EMBL" id="CP001191">
    <property type="protein sequence ID" value="ACI53901.1"/>
    <property type="molecule type" value="Genomic_DNA"/>
</dbReference>
<dbReference type="RefSeq" id="WP_012556811.1">
    <property type="nucleotide sequence ID" value="NC_011369.1"/>
</dbReference>
<dbReference type="SMR" id="B5ZSV2"/>
<dbReference type="STRING" id="395492.Rleg2_0604"/>
<dbReference type="KEGG" id="rlt:Rleg2_0604"/>
<dbReference type="eggNOG" id="COG0109">
    <property type="taxonomic scope" value="Bacteria"/>
</dbReference>
<dbReference type="HOGENOM" id="CLU_029631_0_2_5"/>
<dbReference type="UniPathway" id="UPA00834">
    <property type="reaction ID" value="UER00712"/>
</dbReference>
<dbReference type="Proteomes" id="UP000008330">
    <property type="component" value="Chromosome"/>
</dbReference>
<dbReference type="GO" id="GO:0005886">
    <property type="term" value="C:plasma membrane"/>
    <property type="evidence" value="ECO:0007669"/>
    <property type="project" value="UniProtKB-SubCell"/>
</dbReference>
<dbReference type="GO" id="GO:0008495">
    <property type="term" value="F:protoheme IX farnesyltransferase activity"/>
    <property type="evidence" value="ECO:0007669"/>
    <property type="project" value="UniProtKB-UniRule"/>
</dbReference>
<dbReference type="GO" id="GO:0048034">
    <property type="term" value="P:heme O biosynthetic process"/>
    <property type="evidence" value="ECO:0007669"/>
    <property type="project" value="UniProtKB-UniRule"/>
</dbReference>
<dbReference type="CDD" id="cd13957">
    <property type="entry name" value="PT_UbiA_Cox10"/>
    <property type="match status" value="1"/>
</dbReference>
<dbReference type="Gene3D" id="1.10.357.140">
    <property type="entry name" value="UbiA prenyltransferase"/>
    <property type="match status" value="1"/>
</dbReference>
<dbReference type="HAMAP" id="MF_00154">
    <property type="entry name" value="CyoE_CtaB"/>
    <property type="match status" value="1"/>
</dbReference>
<dbReference type="InterPro" id="IPR006369">
    <property type="entry name" value="Protohaem_IX_farnesylTrfase"/>
</dbReference>
<dbReference type="InterPro" id="IPR000537">
    <property type="entry name" value="UbiA_prenyltransferase"/>
</dbReference>
<dbReference type="InterPro" id="IPR030470">
    <property type="entry name" value="UbiA_prenylTrfase_CS"/>
</dbReference>
<dbReference type="InterPro" id="IPR044878">
    <property type="entry name" value="UbiA_sf"/>
</dbReference>
<dbReference type="NCBIfam" id="TIGR01473">
    <property type="entry name" value="cyoE_ctaB"/>
    <property type="match status" value="1"/>
</dbReference>
<dbReference type="NCBIfam" id="NF003349">
    <property type="entry name" value="PRK04375.1-2"/>
    <property type="match status" value="1"/>
</dbReference>
<dbReference type="PANTHER" id="PTHR43448:SF7">
    <property type="entry name" value="4-HYDROXYBENZOATE SOLANESYLTRANSFERASE"/>
    <property type="match status" value="1"/>
</dbReference>
<dbReference type="PANTHER" id="PTHR43448">
    <property type="entry name" value="PROTOHEME IX FARNESYLTRANSFERASE, MITOCHONDRIAL"/>
    <property type="match status" value="1"/>
</dbReference>
<dbReference type="Pfam" id="PF01040">
    <property type="entry name" value="UbiA"/>
    <property type="match status" value="1"/>
</dbReference>
<dbReference type="PROSITE" id="PS00943">
    <property type="entry name" value="UBIA"/>
    <property type="match status" value="1"/>
</dbReference>
<protein>
    <recommendedName>
        <fullName evidence="1">Protoheme IX farnesyltransferase</fullName>
        <ecNumber evidence="1">2.5.1.141</ecNumber>
    </recommendedName>
    <alternativeName>
        <fullName evidence="1">Heme B farnesyltransferase</fullName>
    </alternativeName>
    <alternativeName>
        <fullName evidence="1">Heme O synthase</fullName>
    </alternativeName>
</protein>
<comment type="function">
    <text evidence="1">Converts heme B (protoheme IX) to heme O by substitution of the vinyl group on carbon 2 of heme B porphyrin ring with a hydroxyethyl farnesyl side group.</text>
</comment>
<comment type="catalytic activity">
    <reaction evidence="1">
        <text>heme b + (2E,6E)-farnesyl diphosphate + H2O = Fe(II)-heme o + diphosphate</text>
        <dbReference type="Rhea" id="RHEA:28070"/>
        <dbReference type="ChEBI" id="CHEBI:15377"/>
        <dbReference type="ChEBI" id="CHEBI:33019"/>
        <dbReference type="ChEBI" id="CHEBI:60344"/>
        <dbReference type="ChEBI" id="CHEBI:60530"/>
        <dbReference type="ChEBI" id="CHEBI:175763"/>
        <dbReference type="EC" id="2.5.1.141"/>
    </reaction>
</comment>
<comment type="pathway">
    <text evidence="1">Porphyrin-containing compound metabolism; heme O biosynthesis; heme O from protoheme: step 1/1.</text>
</comment>
<comment type="subcellular location">
    <subcellularLocation>
        <location evidence="1">Cell inner membrane</location>
        <topology evidence="1">Multi-pass membrane protein</topology>
    </subcellularLocation>
</comment>
<comment type="miscellaneous">
    <text evidence="1">Carbon 2 of the heme B porphyrin ring is defined according to the Fischer nomenclature.</text>
</comment>
<comment type="similarity">
    <text evidence="1">Belongs to the UbiA prenyltransferase family. Protoheme IX farnesyltransferase subfamily.</text>
</comment>
<reference key="1">
    <citation type="journal article" date="2010" name="Stand. Genomic Sci.">
        <title>Complete genome sequence of Rhizobium leguminosarum bv trifolii strain WSM2304, an effective microsymbiont of the South American clover Trifolium polymorphum.</title>
        <authorList>
            <person name="Reeve W."/>
            <person name="O'Hara G."/>
            <person name="Chain P."/>
            <person name="Ardley J."/>
            <person name="Brau L."/>
            <person name="Nandesena K."/>
            <person name="Tiwari R."/>
            <person name="Malfatti S."/>
            <person name="Kiss H."/>
            <person name="Lapidus A."/>
            <person name="Copeland A."/>
            <person name="Nolan M."/>
            <person name="Land M."/>
            <person name="Ivanova N."/>
            <person name="Mavromatis K."/>
            <person name="Markowitz V."/>
            <person name="Kyrpides N."/>
            <person name="Melino V."/>
            <person name="Denton M."/>
            <person name="Yates R."/>
            <person name="Howieson J."/>
        </authorList>
    </citation>
    <scope>NUCLEOTIDE SEQUENCE [LARGE SCALE GENOMIC DNA]</scope>
    <source>
        <strain>WSM2304</strain>
    </source>
</reference>
<gene>
    <name evidence="1" type="primary">ctaB</name>
    <name type="ordered locus">Rleg2_0604</name>
</gene>
<proteinExistence type="inferred from homology"/>